<evidence type="ECO:0000250" key="1">
    <source>
        <dbReference type="UniProtKB" id="L0E2Z4"/>
    </source>
</evidence>
<evidence type="ECO:0000250" key="2">
    <source>
        <dbReference type="UniProtKB" id="O93868"/>
    </source>
</evidence>
<evidence type="ECO:0000255" key="3"/>
<evidence type="ECO:0000255" key="4">
    <source>
        <dbReference type="PROSITE-ProRule" id="PRU00498"/>
    </source>
</evidence>
<evidence type="ECO:0000269" key="5">
    <source>
    </source>
</evidence>
<evidence type="ECO:0000303" key="6">
    <source>
    </source>
</evidence>
<evidence type="ECO:0000305" key="7"/>
<evidence type="ECO:0000305" key="8">
    <source>
    </source>
</evidence>
<protein>
    <recommendedName>
        <fullName evidence="6">Short-chain dehydrogenase iccH</fullName>
        <ecNumber evidence="8">1.1.1.-</ecNumber>
    </recommendedName>
    <alternativeName>
        <fullName evidence="6">Ilicicolin H biosynthesis cluster protein H</fullName>
    </alternativeName>
</protein>
<accession>A0A482ND39</accession>
<proteinExistence type="inferred from homology"/>
<organism>
    <name type="scientific">Talaromyces variabilis</name>
    <name type="common">Penicillium variabile</name>
    <dbReference type="NCBI Taxonomy" id="28576"/>
    <lineage>
        <taxon>Eukaryota</taxon>
        <taxon>Fungi</taxon>
        <taxon>Dikarya</taxon>
        <taxon>Ascomycota</taxon>
        <taxon>Pezizomycotina</taxon>
        <taxon>Eurotiomycetes</taxon>
        <taxon>Eurotiomycetidae</taxon>
        <taxon>Eurotiales</taxon>
        <taxon>Trichocomaceae</taxon>
        <taxon>Talaromyces</taxon>
    </lineage>
</organism>
<keyword id="KW-0325">Glycoprotein</keyword>
<keyword id="KW-0472">Membrane</keyword>
<keyword id="KW-0521">NADP</keyword>
<keyword id="KW-0560">Oxidoreductase</keyword>
<keyword id="KW-0812">Transmembrane</keyword>
<keyword id="KW-1133">Transmembrane helix</keyword>
<name>ICCH_TALVA</name>
<feature type="chain" id="PRO_0000449006" description="Short-chain dehydrogenase iccH">
    <location>
        <begin position="1"/>
        <end position="365"/>
    </location>
</feature>
<feature type="transmembrane region" description="Helical" evidence="3">
    <location>
        <begin position="267"/>
        <end position="287"/>
    </location>
</feature>
<feature type="active site" description="Proton donor" evidence="2">
    <location>
        <position position="221"/>
    </location>
</feature>
<feature type="active site" description="Lowers pKa of active site Tyr" evidence="2">
    <location>
        <position position="225"/>
    </location>
</feature>
<feature type="binding site" evidence="1">
    <location>
        <position position="16"/>
    </location>
    <ligand>
        <name>NADP(+)</name>
        <dbReference type="ChEBI" id="CHEBI:58349"/>
    </ligand>
</feature>
<feature type="binding site" evidence="1">
    <location>
        <position position="52"/>
    </location>
    <ligand>
        <name>NADP(+)</name>
        <dbReference type="ChEBI" id="CHEBI:58349"/>
    </ligand>
</feature>
<feature type="binding site" evidence="1">
    <location>
        <position position="70"/>
    </location>
    <ligand>
        <name>NADP(+)</name>
        <dbReference type="ChEBI" id="CHEBI:58349"/>
    </ligand>
</feature>
<feature type="binding site" evidence="2">
    <location>
        <position position="102"/>
    </location>
    <ligand>
        <name>NADP(+)</name>
        <dbReference type="ChEBI" id="CHEBI:58349"/>
    </ligand>
</feature>
<feature type="binding site" evidence="2">
    <location>
        <position position="221"/>
    </location>
    <ligand>
        <name>NADP(+)</name>
        <dbReference type="ChEBI" id="CHEBI:58349"/>
    </ligand>
</feature>
<feature type="binding site" evidence="2">
    <location>
        <position position="225"/>
    </location>
    <ligand>
        <name>NADP(+)</name>
        <dbReference type="ChEBI" id="CHEBI:58349"/>
    </ligand>
</feature>
<feature type="binding site" evidence="1">
    <location>
        <position position="260"/>
    </location>
    <ligand>
        <name>NADP(+)</name>
        <dbReference type="ChEBI" id="CHEBI:58349"/>
    </ligand>
</feature>
<feature type="glycosylation site" description="N-linked (GlcNAc...) asparagine" evidence="4">
    <location>
        <position position="90"/>
    </location>
</feature>
<feature type="glycosylation site" description="N-linked (GlcNAc...) asparagine" evidence="4">
    <location>
        <position position="291"/>
    </location>
</feature>
<feature type="glycosylation site" description="N-linked (GlcNAc...) asparagine" evidence="4">
    <location>
        <position position="324"/>
    </location>
</feature>
<reference key="1">
    <citation type="journal article" date="2019" name="J. Am. Chem. Soc.">
        <title>Enzyme-catalyzed inverse-electron demand Diels-Alder reaction in the biosynthesis of antifungal ilicicolin H.</title>
        <authorList>
            <person name="Zhang Z."/>
            <person name="Jamieson C.S."/>
            <person name="Zhao Y.L."/>
            <person name="Li D."/>
            <person name="Ohashi M."/>
            <person name="Houk K.N."/>
            <person name="Tang Y."/>
        </authorList>
    </citation>
    <scope>NUCLEOTIDE SEQUENCE [GENOMIC DNA]</scope>
    <scope>FUNCTION</scope>
    <scope>PATHWAY</scope>
    <source>
        <strain>HXQ-H-1</strain>
    </source>
</reference>
<gene>
    <name evidence="6" type="primary">iccH</name>
</gene>
<sequence>MNQQGTVIVTGANGGLGNAIVSHILDRQDLNTNYYGIYTVRDTVRGARTVLRTLEWAKSVKHSHELLAIDLGSLDSVRRAARDINSRVANGTIPPIRALILNAGWGEQTTHSFTNDGFDMSFQVNYLSHFLLTLLLLQSMDKKHGRIEVLGSWTHEYLIPGVSTCSTTDPNNKKGPSASMYTPKRYQQIFNYPINTEDLAKGKWSSEREHPGDLNAGLRRYGAAKLCEIMMFRELSNRIEKDPELSAISVVAVDPGAMPSELNRRSIWVMFLLMKFVLPLLAPLAVWLQPNGTIRTTTKSARDVVRAAFDTATLGDHPNGIYLNGSEIADVGPEAKDAEKSRTLWHDSLVYARLEKGDTILKAWE</sequence>
<dbReference type="EC" id="1.1.1.-" evidence="8"/>
<dbReference type="EMBL" id="MK539848">
    <property type="protein sequence ID" value="QBQ83706.1"/>
    <property type="molecule type" value="Genomic_DNA"/>
</dbReference>
<dbReference type="SMR" id="A0A482ND39"/>
<dbReference type="GlyCosmos" id="A0A482ND39">
    <property type="glycosylation" value="3 sites, No reported glycans"/>
</dbReference>
<dbReference type="GO" id="GO:0016020">
    <property type="term" value="C:membrane"/>
    <property type="evidence" value="ECO:0007669"/>
    <property type="project" value="UniProtKB-SubCell"/>
</dbReference>
<dbReference type="GO" id="GO:0016491">
    <property type="term" value="F:oxidoreductase activity"/>
    <property type="evidence" value="ECO:0007669"/>
    <property type="project" value="UniProtKB-KW"/>
</dbReference>
<dbReference type="Gene3D" id="3.40.50.720">
    <property type="entry name" value="NAD(P)-binding Rossmann-like Domain"/>
    <property type="match status" value="1"/>
</dbReference>
<dbReference type="InterPro" id="IPR036291">
    <property type="entry name" value="NAD(P)-bd_dom_sf"/>
</dbReference>
<dbReference type="InterPro" id="IPR002347">
    <property type="entry name" value="SDR_fam"/>
</dbReference>
<dbReference type="PANTHER" id="PTHR24320">
    <property type="entry name" value="RETINOL DEHYDROGENASE"/>
    <property type="match status" value="1"/>
</dbReference>
<dbReference type="PANTHER" id="PTHR24320:SF152">
    <property type="entry name" value="SHORT-CHAIN DEHYDROGENASE_REDUCTASE FAMILY PROTEIN"/>
    <property type="match status" value="1"/>
</dbReference>
<dbReference type="Pfam" id="PF00106">
    <property type="entry name" value="adh_short"/>
    <property type="match status" value="1"/>
</dbReference>
<dbReference type="PRINTS" id="PR00081">
    <property type="entry name" value="GDHRDH"/>
</dbReference>
<dbReference type="SUPFAM" id="SSF51735">
    <property type="entry name" value="NAD(P)-binding Rossmann-fold domains"/>
    <property type="match status" value="1"/>
</dbReference>
<comment type="function">
    <text evidence="5 8">NADH-dependent flavin oxidoreductase; part of the gene cluster that mediates the biosynthesis of ilicicolin H, a 4-hydroxy-2-pyridonealkaloid that has potent and broad antifungal activities by inhibiting the mitochondrial respiration chain (PubMed:30905148). IccA to iccE are sufficient for ilicicolin H biosynthesis and the roles of the remaining enzymes, iccF, iccG and iccH within the pathway have still to be determined (PubMed:30905148). The biosynthesis of ilicicolin H starts with formation of the tetramic acid by the hybrid PKS-NRPS synthetase iccA with the partnering trans-enoyl reductase iccB since iccA lacks a designated enoylreductase (ER) domain. The cytochrome P450 monooxygenase iccC then catalyzes the ring expansion of the tetramate to the acyclic 2-pyridone. The pericyclase iccD further converts the acyclic 2-pyridone into 8-epi-ilicicolin H. Finally, the epimerase iccE converts 8-epi-ilicicolin H into ilicicolin H via epimerizationd (Probable) (PubMed:30905148).</text>
</comment>
<comment type="pathway">
    <text evidence="8">Mycotoxin biosynthesis.</text>
</comment>
<comment type="subcellular location">
    <subcellularLocation>
        <location evidence="3">Membrane</location>
        <topology evidence="3">Single-pass membrane protein</topology>
    </subcellularLocation>
</comment>
<comment type="similarity">
    <text evidence="7">Belongs to the short-chain dehydrogenases/reductases (SDR) family.</text>
</comment>